<comment type="function">
    <text evidence="1">Neurotoxin with probable activity on sodium channel. Induces intense repetitive firing of the frog neuromuscular junction, leading to a tetanic contracture in muscle fiber (spastic paralysis). In vivo, shows the same effect as the whole venom when injected on fish prey.</text>
</comment>
<comment type="subcellular location">
    <subcellularLocation>
        <location evidence="5">Secreted</location>
    </subcellularLocation>
</comment>
<comment type="tissue specificity">
    <text evidence="5">Expressed by the venom duct.</text>
</comment>
<comment type="domain">
    <text evidence="4">The cysteine framework is IV (CC-C-C-C-C).</text>
</comment>
<comment type="PTM">
    <text evidence="1">Contains 3 disulfide bonds.</text>
</comment>
<comment type="similarity">
    <text evidence="4">Belongs to the conotoxin A superfamily.</text>
</comment>
<proteinExistence type="inferred from homology"/>
<feature type="signal peptide" evidence="2">
    <location>
        <begin position="1"/>
        <end position="21"/>
    </location>
</feature>
<feature type="propeptide" id="PRO_0000392709" evidence="1">
    <location>
        <begin position="22"/>
        <end position="38"/>
    </location>
</feature>
<feature type="peptide" id="PRO_0000392710" description="Conotoxin SmIVB" evidence="1">
    <location>
        <begin position="39"/>
        <end position="75"/>
    </location>
</feature>
<feature type="propeptide" id="PRO_0000392711" evidence="1">
    <location>
        <begin position="76"/>
        <end position="80"/>
    </location>
</feature>
<feature type="modified residue" description="4-hydroxyproline" evidence="1">
    <location>
        <position position="40"/>
    </location>
</feature>
<feature type="modified residue" description="4-hydroxyproline" evidence="1">
    <location>
        <position position="55"/>
    </location>
</feature>
<feature type="modified residue" description="4-hydroxyproline" evidence="1">
    <location>
        <position position="60"/>
    </location>
</feature>
<feature type="modified residue" description="4-hydroxyproline" evidence="1">
    <location>
        <position position="61"/>
    </location>
</feature>
<feature type="modified residue" description="4-hydroxyproline" evidence="1">
    <location>
        <position position="70"/>
    </location>
</feature>
<feature type="modified residue" description="4-hydroxyproline" evidence="1">
    <location>
        <position position="72"/>
    </location>
</feature>
<feature type="modified residue" description="Serine amide" evidence="1">
    <location>
        <position position="75"/>
    </location>
</feature>
<feature type="glycosylation site" description="O-linked (HexNAc...) serine" evidence="1">
    <location>
        <position position="45"/>
    </location>
</feature>
<sequence>MGMRMMFTVFLLVVLATTVVSIPSDRASDGRNAEVNERAPWLVPSTITTCCGYDPGSMCPPCMCNNTCKPKPKKSGRRNH</sequence>
<dbReference type="SMR" id="P0CE76"/>
<dbReference type="GO" id="GO:0005576">
    <property type="term" value="C:extracellular region"/>
    <property type="evidence" value="ECO:0007669"/>
    <property type="project" value="UniProtKB-SubCell"/>
</dbReference>
<dbReference type="GO" id="GO:0030550">
    <property type="term" value="F:acetylcholine receptor inhibitor activity"/>
    <property type="evidence" value="ECO:0007669"/>
    <property type="project" value="InterPro"/>
</dbReference>
<dbReference type="GO" id="GO:0017080">
    <property type="term" value="F:sodium channel regulator activity"/>
    <property type="evidence" value="ECO:0007669"/>
    <property type="project" value="UniProtKB-KW"/>
</dbReference>
<dbReference type="GO" id="GO:0090729">
    <property type="term" value="F:toxin activity"/>
    <property type="evidence" value="ECO:0007669"/>
    <property type="project" value="UniProtKB-KW"/>
</dbReference>
<dbReference type="InterPro" id="IPR009958">
    <property type="entry name" value="Conotoxin_a-typ"/>
</dbReference>
<dbReference type="Pfam" id="PF07365">
    <property type="entry name" value="Toxin_8"/>
    <property type="match status" value="1"/>
</dbReference>
<name>CA4B_CONSE</name>
<evidence type="ECO:0000250" key="1">
    <source>
        <dbReference type="UniProtKB" id="P0C829"/>
    </source>
</evidence>
<evidence type="ECO:0000255" key="2"/>
<evidence type="ECO:0000303" key="3">
    <source>
    </source>
</evidence>
<evidence type="ECO:0000305" key="4"/>
<evidence type="ECO:0000305" key="5">
    <source>
    </source>
</evidence>
<accession>P0CE76</accession>
<accession>P0C1Y3</accession>
<protein>
    <recommendedName>
        <fullName evidence="3">Conotoxin SmIVB</fullName>
    </recommendedName>
</protein>
<organism>
    <name type="scientific">Conus stercusmuscarum</name>
    <name type="common">Fly-specked cone</name>
    <dbReference type="NCBI Taxonomy" id="89452"/>
    <lineage>
        <taxon>Eukaryota</taxon>
        <taxon>Metazoa</taxon>
        <taxon>Spiralia</taxon>
        <taxon>Lophotrochozoa</taxon>
        <taxon>Mollusca</taxon>
        <taxon>Gastropoda</taxon>
        <taxon>Caenogastropoda</taxon>
        <taxon>Neogastropoda</taxon>
        <taxon>Conoidea</taxon>
        <taxon>Conidae</taxon>
        <taxon>Conus</taxon>
        <taxon>Pionoconus</taxon>
    </lineage>
</organism>
<reference key="1">
    <citation type="journal article" date="2004" name="J. Biol. Chem.">
        <title>The A-superfamily of conotoxins: structural and functional divergence.</title>
        <authorList>
            <person name="Santos A.D."/>
            <person name="McIntosh J.M."/>
            <person name="Hillyard D.R."/>
            <person name="Cruz L.J."/>
            <person name="Olivera B.M."/>
        </authorList>
    </citation>
    <scope>NUCLEOTIDE SEQUENCE [MRNA]</scope>
    <source>
        <tissue>Venom duct</tissue>
    </source>
</reference>
<keyword id="KW-0027">Amidation</keyword>
<keyword id="KW-1015">Disulfide bond</keyword>
<keyword id="KW-0325">Glycoprotein</keyword>
<keyword id="KW-0379">Hydroxylation</keyword>
<keyword id="KW-0872">Ion channel impairing toxin</keyword>
<keyword id="KW-0528">Neurotoxin</keyword>
<keyword id="KW-0873">Pyrrolidone carboxylic acid</keyword>
<keyword id="KW-0964">Secreted</keyword>
<keyword id="KW-0732">Signal</keyword>
<keyword id="KW-0800">Toxin</keyword>
<keyword id="KW-0738">Voltage-gated sodium channel impairing toxin</keyword>